<keyword id="KW-0687">Ribonucleoprotein</keyword>
<keyword id="KW-0689">Ribosomal protein</keyword>
<comment type="similarity">
    <text evidence="1">Belongs to the bacterial ribosomal protein bL35 family.</text>
</comment>
<reference key="1">
    <citation type="submission" date="2007-05" db="EMBL/GenBank/DDBJ databases">
        <title>Complete sequence of Dehalococcoides sp. BAV1.</title>
        <authorList>
            <consortium name="US DOE Joint Genome Institute"/>
            <person name="Copeland A."/>
            <person name="Lucas S."/>
            <person name="Lapidus A."/>
            <person name="Barry K."/>
            <person name="Detter J.C."/>
            <person name="Glavina del Rio T."/>
            <person name="Hammon N."/>
            <person name="Israni S."/>
            <person name="Pitluck S."/>
            <person name="Lowry S."/>
            <person name="Clum A."/>
            <person name="Schmutz J."/>
            <person name="Larimer F."/>
            <person name="Land M."/>
            <person name="Hauser L."/>
            <person name="Kyrpides N."/>
            <person name="Kim E."/>
            <person name="Ritalahti K.M."/>
            <person name="Loeffler F."/>
            <person name="Richardson P."/>
        </authorList>
    </citation>
    <scope>NUCLEOTIDE SEQUENCE [LARGE SCALE GENOMIC DNA]</scope>
    <source>
        <strain>ATCC BAA-2100 / JCM 16839 / KCTC 5957 / BAV1</strain>
    </source>
</reference>
<gene>
    <name evidence="1" type="primary">rpmI</name>
    <name type="ordered locus">DehaBAV1_0679</name>
</gene>
<protein>
    <recommendedName>
        <fullName evidence="1">Large ribosomal subunit protein bL35</fullName>
    </recommendedName>
    <alternativeName>
        <fullName evidence="2">50S ribosomal protein L35</fullName>
    </alternativeName>
</protein>
<accession>A5FRB1</accession>
<name>RL35_DEHMB</name>
<proteinExistence type="inferred from homology"/>
<dbReference type="EMBL" id="CP000688">
    <property type="protein sequence ID" value="ABQ17263.1"/>
    <property type="molecule type" value="Genomic_DNA"/>
</dbReference>
<dbReference type="SMR" id="A5FRB1"/>
<dbReference type="KEGG" id="deb:DehaBAV1_0679"/>
<dbReference type="PATRIC" id="fig|216389.18.peg.728"/>
<dbReference type="HOGENOM" id="CLU_169643_4_1_0"/>
<dbReference type="GO" id="GO:0022625">
    <property type="term" value="C:cytosolic large ribosomal subunit"/>
    <property type="evidence" value="ECO:0007669"/>
    <property type="project" value="TreeGrafter"/>
</dbReference>
<dbReference type="GO" id="GO:0003735">
    <property type="term" value="F:structural constituent of ribosome"/>
    <property type="evidence" value="ECO:0007669"/>
    <property type="project" value="InterPro"/>
</dbReference>
<dbReference type="GO" id="GO:0006412">
    <property type="term" value="P:translation"/>
    <property type="evidence" value="ECO:0007669"/>
    <property type="project" value="UniProtKB-UniRule"/>
</dbReference>
<dbReference type="FunFam" id="4.10.410.60:FF:000001">
    <property type="entry name" value="50S ribosomal protein L35"/>
    <property type="match status" value="1"/>
</dbReference>
<dbReference type="Gene3D" id="4.10.410.60">
    <property type="match status" value="1"/>
</dbReference>
<dbReference type="HAMAP" id="MF_00514">
    <property type="entry name" value="Ribosomal_bL35"/>
    <property type="match status" value="1"/>
</dbReference>
<dbReference type="InterPro" id="IPR001706">
    <property type="entry name" value="Ribosomal_bL35"/>
</dbReference>
<dbReference type="InterPro" id="IPR021137">
    <property type="entry name" value="Ribosomal_bL35-like"/>
</dbReference>
<dbReference type="InterPro" id="IPR037229">
    <property type="entry name" value="Ribosomal_bL35_sf"/>
</dbReference>
<dbReference type="NCBIfam" id="TIGR00001">
    <property type="entry name" value="rpmI_bact"/>
    <property type="match status" value="1"/>
</dbReference>
<dbReference type="PANTHER" id="PTHR33343">
    <property type="entry name" value="54S RIBOSOMAL PROTEIN BL35M"/>
    <property type="match status" value="1"/>
</dbReference>
<dbReference type="PANTHER" id="PTHR33343:SF1">
    <property type="entry name" value="LARGE RIBOSOMAL SUBUNIT PROTEIN BL35M"/>
    <property type="match status" value="1"/>
</dbReference>
<dbReference type="Pfam" id="PF01632">
    <property type="entry name" value="Ribosomal_L35p"/>
    <property type="match status" value="1"/>
</dbReference>
<dbReference type="PRINTS" id="PR00064">
    <property type="entry name" value="RIBOSOMALL35"/>
</dbReference>
<dbReference type="SUPFAM" id="SSF143034">
    <property type="entry name" value="L35p-like"/>
    <property type="match status" value="1"/>
</dbReference>
<feature type="chain" id="PRO_1000081606" description="Large ribosomal subunit protein bL35">
    <location>
        <begin position="1"/>
        <end position="67"/>
    </location>
</feature>
<evidence type="ECO:0000255" key="1">
    <source>
        <dbReference type="HAMAP-Rule" id="MF_00514"/>
    </source>
</evidence>
<evidence type="ECO:0000305" key="2"/>
<organism>
    <name type="scientific">Dehalococcoides mccartyi (strain ATCC BAA-2100 / JCM 16839 / KCTC 5957 / BAV1)</name>
    <dbReference type="NCBI Taxonomy" id="216389"/>
    <lineage>
        <taxon>Bacteria</taxon>
        <taxon>Bacillati</taxon>
        <taxon>Chloroflexota</taxon>
        <taxon>Dehalococcoidia</taxon>
        <taxon>Dehalococcoidales</taxon>
        <taxon>Dehalococcoidaceae</taxon>
        <taxon>Dehalococcoides</taxon>
    </lineage>
</organism>
<sequence>MPKMKTRKTAAKRFHVTGTGKIMRSKGMKSHLRRNKSARVLRQFDEMSQVAGVDRARIQKLIPYGVS</sequence>